<comment type="function">
    <text evidence="2 7 9">Acts as a guanine-nucleotide exchange factor (GEF). Promotes guanine-nucleotide exchange on ARF1, ARF3 and ARF6. Activates ARF factors through replacement of GDP with GTP (PubMed:18042453). The cell membrane form, in association with ARL4 proteins, recruits ARF6 to the plasma membrane (By similarity). Involved in neurite growth (PubMed:25326380).</text>
</comment>
<comment type="subunit">
    <text evidence="2 8 9">Heteromer. Composed of TAMALIN, CYTH2 and at least one GRM1. Interacts with ARRB1. Interacts with ARL4D; the interaction is direct (By similarity). Directly interacts with CCDC120 through the coiled coil domain; this interaction stabilizes CCDC120, possibly by preventing its ubiquitination, and is required for neurite growth in a neuroblastoma cell line (PubMed:25326380). Interacts with FRMD4A (PubMed:20080746). Interacts (via N-terminal domain) with INAVA (via N-terminal domain) (By similarity).</text>
</comment>
<comment type="interaction">
    <interactant intactId="EBI-988425">
        <id>P63034</id>
    </interactant>
    <interactant intactId="EBI-988456">
        <id>P15920</id>
        <label>Atp6v0a2</label>
    </interactant>
    <organismsDiffer>false</organismsDiffer>
    <experiments>5</experiments>
</comment>
<comment type="subcellular location">
    <subcellularLocation>
        <location evidence="2">Cell membrane</location>
        <topology evidence="2">Peripheral membrane protein</topology>
    </subcellularLocation>
    <subcellularLocation>
        <location evidence="9">Cytoplasm</location>
    </subcellularLocation>
    <subcellularLocation>
        <location evidence="9">Cell projection</location>
    </subcellularLocation>
    <subcellularLocation>
        <location evidence="9">Cell projection</location>
        <location evidence="9">Growth cone</location>
    </subcellularLocation>
    <subcellularLocation>
        <location evidence="8">Cell junction</location>
        <location evidence="8">Tight junction</location>
    </subcellularLocation>
    <subcellularLocation>
        <location evidence="8">Cell junction</location>
        <location evidence="8">Adherens junction</location>
    </subcellularLocation>
    <text evidence="1 9">Recruited to the cell membrane through its association with ARL4A, ARL4C and ARL4D. Also requires interaction with phosphoinositides for targeting to plasma membrane (By similarity). In differentiating neuroblastoma cells, colocalizes with CCDC120 in both neurite shaft and growth cone areas.</text>
</comment>
<comment type="alternative products">
    <event type="alternative splicing"/>
    <isoform>
        <id>P63034-1</id>
        <id>P97695-1</id>
        <name>1</name>
        <name>CLM2-A</name>
        <sequence type="displayed"/>
    </isoform>
    <isoform>
        <id>P63034-2</id>
        <id>P97695-2</id>
        <name>2</name>
        <sequence type="described" ref="VSP_006038"/>
    </isoform>
    <isoform>
        <id>P63034-3</id>
        <id>P97695-3</id>
        <name>3</name>
        <name>CLM2-B</name>
        <sequence type="described" ref="VSP_006037"/>
    </isoform>
</comment>
<comment type="tissue specificity">
    <text>Present in all tissues tested, with highest protein levels in brain and adrenal.</text>
</comment>
<comment type="developmental stage">
    <text evidence="9">Up-regulated in differentiating neuroblastoma cells.</text>
</comment>
<comment type="domain">
    <text evidence="1">Binds via its PH domain to the inositol head group of phosphatidylinositol 3,4,5-trisphosphate. The PH domain is necessary and sufficient for plasma membrane relocalization (By similarity).</text>
</comment>
<comment type="domain">
    <text evidence="1">Autoinhibited by its C-terminal basic region.</text>
</comment>
<comment type="domain">
    <text evidence="9">The coiled coil domain is involved in interaction with CCDC120.</text>
</comment>
<dbReference type="EMBL" id="AB013466">
    <property type="protein sequence ID" value="BAA33429.1"/>
    <property type="molecule type" value="mRNA"/>
</dbReference>
<dbReference type="EMBL" id="AB013467">
    <property type="protein sequence ID" value="BAA33430.1"/>
    <property type="molecule type" value="mRNA"/>
</dbReference>
<dbReference type="EMBL" id="AB013469">
    <property type="protein sequence ID" value="BAA33431.1"/>
    <property type="molecule type" value="Genomic_DNA"/>
</dbReference>
<dbReference type="EMBL" id="AB013469">
    <property type="protein sequence ID" value="BAA33432.1"/>
    <property type="molecule type" value="Genomic_DNA"/>
</dbReference>
<dbReference type="EMBL" id="AF079971">
    <property type="protein sequence ID" value="AAC77924.1"/>
    <property type="molecule type" value="mRNA"/>
</dbReference>
<dbReference type="EMBL" id="AK045451">
    <property type="protein sequence ID" value="BAC32376.1"/>
    <property type="molecule type" value="mRNA"/>
</dbReference>
<dbReference type="EMBL" id="AK143829">
    <property type="protein sequence ID" value="BAE25558.1"/>
    <property type="molecule type" value="mRNA"/>
</dbReference>
<dbReference type="EMBL" id="AC149053">
    <property type="status" value="NOT_ANNOTATED_CDS"/>
    <property type="molecule type" value="Genomic_DNA"/>
</dbReference>
<dbReference type="CCDS" id="CCDS52249.1">
    <molecule id="P63034-2"/>
</dbReference>
<dbReference type="RefSeq" id="NP_001106171.1">
    <property type="nucleotide sequence ID" value="NM_001112701.1"/>
</dbReference>
<dbReference type="RefSeq" id="NP_035311.1">
    <molecule id="P63034-1"/>
    <property type="nucleotide sequence ID" value="NM_011181.4"/>
</dbReference>
<dbReference type="PDB" id="1U27">
    <property type="method" value="X-ray"/>
    <property type="resolution" value="2.30 A"/>
    <property type="chains" value="A=260-378"/>
</dbReference>
<dbReference type="PDB" id="1U29">
    <property type="method" value="X-ray"/>
    <property type="resolution" value="1.80 A"/>
    <property type="chains" value="A=260-378"/>
</dbReference>
<dbReference type="PDBsum" id="1U27"/>
<dbReference type="PDBsum" id="1U29"/>
<dbReference type="BMRB" id="P63034"/>
<dbReference type="SASBDB" id="P63034"/>
<dbReference type="SMR" id="P63034"/>
<dbReference type="BioGRID" id="202412">
    <property type="interactions" value="15"/>
</dbReference>
<dbReference type="CORUM" id="P63034"/>
<dbReference type="FunCoup" id="P63034">
    <property type="interactions" value="1302"/>
</dbReference>
<dbReference type="IntAct" id="P63034">
    <property type="interactions" value="3"/>
</dbReference>
<dbReference type="MINT" id="P63034"/>
<dbReference type="STRING" id="10090.ENSMUSP00000103357"/>
<dbReference type="iPTMnet" id="P63034"/>
<dbReference type="PhosphoSitePlus" id="P63034"/>
<dbReference type="SwissPalm" id="P63034"/>
<dbReference type="PaxDb" id="10090-ENSMUSP00000103357"/>
<dbReference type="ProteomicsDB" id="285440"/>
<dbReference type="ProteomicsDB" id="285441">
    <molecule id="P63034-2"/>
</dbReference>
<dbReference type="ProteomicsDB" id="285442">
    <molecule id="P63034-3"/>
</dbReference>
<dbReference type="Pumba" id="P63034"/>
<dbReference type="Antibodypedia" id="4437">
    <property type="antibodies" value="301 antibodies from 32 providers"/>
</dbReference>
<dbReference type="DNASU" id="19158"/>
<dbReference type="GeneID" id="19158"/>
<dbReference type="KEGG" id="mmu:19158"/>
<dbReference type="UCSC" id="uc009gxf.2">
    <property type="organism name" value="mouse"/>
</dbReference>
<dbReference type="AGR" id="MGI:1334255"/>
<dbReference type="CTD" id="9266"/>
<dbReference type="MGI" id="MGI:1334255">
    <property type="gene designation" value="Cyth2"/>
</dbReference>
<dbReference type="VEuPathDB" id="HostDB:ENSMUSG00000003269"/>
<dbReference type="eggNOG" id="KOG0930">
    <property type="taxonomic scope" value="Eukaryota"/>
</dbReference>
<dbReference type="InParanoid" id="P63034"/>
<dbReference type="OrthoDB" id="4579at9989"/>
<dbReference type="Reactome" id="R-MMU-6811438">
    <property type="pathway name" value="Intra-Golgi traffic"/>
</dbReference>
<dbReference type="BioGRID-ORCS" id="19158">
    <property type="hits" value="5 hits in 77 CRISPR screens"/>
</dbReference>
<dbReference type="CD-CODE" id="CE726F99">
    <property type="entry name" value="Postsynaptic density"/>
</dbReference>
<dbReference type="ChiTaRS" id="Cyth2">
    <property type="organism name" value="mouse"/>
</dbReference>
<dbReference type="EvolutionaryTrace" id="P63034"/>
<dbReference type="PRO" id="PR:P63034"/>
<dbReference type="Proteomes" id="UP000000589">
    <property type="component" value="Chromosome 7"/>
</dbReference>
<dbReference type="RNAct" id="P63034">
    <property type="molecule type" value="protein"/>
</dbReference>
<dbReference type="Bgee" id="ENSMUSG00000003269">
    <property type="expression patterns" value="Expressed in cortical plate and 266 other cell types or tissues"/>
</dbReference>
<dbReference type="ExpressionAtlas" id="P63034">
    <property type="expression patterns" value="baseline and differential"/>
</dbReference>
<dbReference type="GO" id="GO:0005912">
    <property type="term" value="C:adherens junction"/>
    <property type="evidence" value="ECO:0007669"/>
    <property type="project" value="UniProtKB-SubCell"/>
</dbReference>
<dbReference type="GO" id="GO:0005923">
    <property type="term" value="C:bicellular tight junction"/>
    <property type="evidence" value="ECO:0000314"/>
    <property type="project" value="UniProtKB"/>
</dbReference>
<dbReference type="GO" id="GO:0005737">
    <property type="term" value="C:cytoplasm"/>
    <property type="evidence" value="ECO:0000250"/>
    <property type="project" value="UniProtKB"/>
</dbReference>
<dbReference type="GO" id="GO:0098978">
    <property type="term" value="C:glutamatergic synapse"/>
    <property type="evidence" value="ECO:0000314"/>
    <property type="project" value="SynGO"/>
</dbReference>
<dbReference type="GO" id="GO:0030426">
    <property type="term" value="C:growth cone"/>
    <property type="evidence" value="ECO:0007669"/>
    <property type="project" value="UniProtKB-SubCell"/>
</dbReference>
<dbReference type="GO" id="GO:0005886">
    <property type="term" value="C:plasma membrane"/>
    <property type="evidence" value="ECO:0000250"/>
    <property type="project" value="UniProtKB"/>
</dbReference>
<dbReference type="GO" id="GO:0098794">
    <property type="term" value="C:postsynapse"/>
    <property type="evidence" value="ECO:0000314"/>
    <property type="project" value="SynGO"/>
</dbReference>
<dbReference type="GO" id="GO:0005085">
    <property type="term" value="F:guanyl-nucleotide exchange factor activity"/>
    <property type="evidence" value="ECO:0000314"/>
    <property type="project" value="UniProtKB"/>
</dbReference>
<dbReference type="GO" id="GO:0070679">
    <property type="term" value="F:inositol 1,4,5 trisphosphate binding"/>
    <property type="evidence" value="ECO:0000314"/>
    <property type="project" value="UniProtKB"/>
</dbReference>
<dbReference type="GO" id="GO:0008289">
    <property type="term" value="F:lipid binding"/>
    <property type="evidence" value="ECO:0007669"/>
    <property type="project" value="UniProtKB-KW"/>
</dbReference>
<dbReference type="GO" id="GO:0032012">
    <property type="term" value="P:regulation of ARF protein signal transduction"/>
    <property type="evidence" value="ECO:0007669"/>
    <property type="project" value="InterPro"/>
</dbReference>
<dbReference type="GO" id="GO:0030155">
    <property type="term" value="P:regulation of cell adhesion"/>
    <property type="evidence" value="ECO:0000266"/>
    <property type="project" value="MGI"/>
</dbReference>
<dbReference type="CDD" id="cd01252">
    <property type="entry name" value="PH_GRP1-like"/>
    <property type="match status" value="1"/>
</dbReference>
<dbReference type="CDD" id="cd00171">
    <property type="entry name" value="Sec7"/>
    <property type="match status" value="1"/>
</dbReference>
<dbReference type="FunFam" id="1.10.1000.11:FF:000002">
    <property type="entry name" value="Cytohesin 1"/>
    <property type="match status" value="1"/>
</dbReference>
<dbReference type="FunFam" id="1.10.220.20:FF:000003">
    <property type="entry name" value="Cytohesin 1"/>
    <property type="match status" value="1"/>
</dbReference>
<dbReference type="FunFam" id="2.30.29.30:FF:000009">
    <property type="entry name" value="Cytohesin 1"/>
    <property type="match status" value="1"/>
</dbReference>
<dbReference type="Gene3D" id="1.10.220.20">
    <property type="match status" value="1"/>
</dbReference>
<dbReference type="Gene3D" id="1.10.1000.11">
    <property type="entry name" value="Arf Nucleotide-binding Site Opener,domain 2"/>
    <property type="match status" value="1"/>
</dbReference>
<dbReference type="Gene3D" id="2.30.29.30">
    <property type="entry name" value="Pleckstrin-homology domain (PH domain)/Phosphotyrosine-binding domain (PTB)"/>
    <property type="match status" value="1"/>
</dbReference>
<dbReference type="InterPro" id="IPR011993">
    <property type="entry name" value="PH-like_dom_sf"/>
</dbReference>
<dbReference type="InterPro" id="IPR001849">
    <property type="entry name" value="PH_domain"/>
</dbReference>
<dbReference type="InterPro" id="IPR023394">
    <property type="entry name" value="Sec7_C_sf"/>
</dbReference>
<dbReference type="InterPro" id="IPR000904">
    <property type="entry name" value="Sec7_dom"/>
</dbReference>
<dbReference type="InterPro" id="IPR035999">
    <property type="entry name" value="Sec7_dom_sf"/>
</dbReference>
<dbReference type="PANTHER" id="PTHR10663:SF343">
    <property type="entry name" value="CYTOHESIN-2"/>
    <property type="match status" value="1"/>
</dbReference>
<dbReference type="PANTHER" id="PTHR10663">
    <property type="entry name" value="GUANYL-NUCLEOTIDE EXCHANGE FACTOR"/>
    <property type="match status" value="1"/>
</dbReference>
<dbReference type="Pfam" id="PF00169">
    <property type="entry name" value="PH"/>
    <property type="match status" value="1"/>
</dbReference>
<dbReference type="Pfam" id="PF01369">
    <property type="entry name" value="Sec7"/>
    <property type="match status" value="1"/>
</dbReference>
<dbReference type="SMART" id="SM00233">
    <property type="entry name" value="PH"/>
    <property type="match status" value="1"/>
</dbReference>
<dbReference type="SMART" id="SM00222">
    <property type="entry name" value="Sec7"/>
    <property type="match status" value="1"/>
</dbReference>
<dbReference type="SUPFAM" id="SSF50729">
    <property type="entry name" value="PH domain-like"/>
    <property type="match status" value="1"/>
</dbReference>
<dbReference type="SUPFAM" id="SSF48425">
    <property type="entry name" value="Sec7 domain"/>
    <property type="match status" value="1"/>
</dbReference>
<dbReference type="PROSITE" id="PS50003">
    <property type="entry name" value="PH_DOMAIN"/>
    <property type="match status" value="1"/>
</dbReference>
<dbReference type="PROSITE" id="PS50190">
    <property type="entry name" value="SEC7"/>
    <property type="match status" value="1"/>
</dbReference>
<name>CYH2_MOUSE</name>
<reference key="1">
    <citation type="journal article" date="1998" name="FEBS Lett.">
        <title>Complex regulation of multiple cytohesin-like genes in murine tissues and cells.</title>
        <authorList>
            <person name="Kim H.-S."/>
            <person name="Chen Y."/>
            <person name="Lonai P."/>
        </authorList>
    </citation>
    <scope>NUCLEOTIDE SEQUENCE [GENOMIC DNA / MRNA] (ISOFORMS 1 AND 3)</scope>
    <source>
        <tissue>Brain</tissue>
    </source>
</reference>
<reference key="2">
    <citation type="submission" date="1998-07" db="EMBL/GenBank/DDBJ databases">
        <title>cDNA cloning of mouse cytohesin-2 and demonstration of its association with the integrin beta2 subunit.</title>
        <authorList>
            <person name="Liu D."/>
            <person name="Zhang H."/>
            <person name="Lu J."/>
        </authorList>
    </citation>
    <scope>NUCLEOTIDE SEQUENCE [MRNA] (ISOFORM 1)</scope>
</reference>
<reference key="3">
    <citation type="journal article" date="2005" name="Science">
        <title>The transcriptional landscape of the mammalian genome.</title>
        <authorList>
            <person name="Carninci P."/>
            <person name="Kasukawa T."/>
            <person name="Katayama S."/>
            <person name="Gough J."/>
            <person name="Frith M.C."/>
            <person name="Maeda N."/>
            <person name="Oyama R."/>
            <person name="Ravasi T."/>
            <person name="Lenhard B."/>
            <person name="Wells C."/>
            <person name="Kodzius R."/>
            <person name="Shimokawa K."/>
            <person name="Bajic V.B."/>
            <person name="Brenner S.E."/>
            <person name="Batalov S."/>
            <person name="Forrest A.R."/>
            <person name="Zavolan M."/>
            <person name="Davis M.J."/>
            <person name="Wilming L.G."/>
            <person name="Aidinis V."/>
            <person name="Allen J.E."/>
            <person name="Ambesi-Impiombato A."/>
            <person name="Apweiler R."/>
            <person name="Aturaliya R.N."/>
            <person name="Bailey T.L."/>
            <person name="Bansal M."/>
            <person name="Baxter L."/>
            <person name="Beisel K.W."/>
            <person name="Bersano T."/>
            <person name="Bono H."/>
            <person name="Chalk A.M."/>
            <person name="Chiu K.P."/>
            <person name="Choudhary V."/>
            <person name="Christoffels A."/>
            <person name="Clutterbuck D.R."/>
            <person name="Crowe M.L."/>
            <person name="Dalla E."/>
            <person name="Dalrymple B.P."/>
            <person name="de Bono B."/>
            <person name="Della Gatta G."/>
            <person name="di Bernardo D."/>
            <person name="Down T."/>
            <person name="Engstrom P."/>
            <person name="Fagiolini M."/>
            <person name="Faulkner G."/>
            <person name="Fletcher C.F."/>
            <person name="Fukushima T."/>
            <person name="Furuno M."/>
            <person name="Futaki S."/>
            <person name="Gariboldi M."/>
            <person name="Georgii-Hemming P."/>
            <person name="Gingeras T.R."/>
            <person name="Gojobori T."/>
            <person name="Green R.E."/>
            <person name="Gustincich S."/>
            <person name="Harbers M."/>
            <person name="Hayashi Y."/>
            <person name="Hensch T.K."/>
            <person name="Hirokawa N."/>
            <person name="Hill D."/>
            <person name="Huminiecki L."/>
            <person name="Iacono M."/>
            <person name="Ikeo K."/>
            <person name="Iwama A."/>
            <person name="Ishikawa T."/>
            <person name="Jakt M."/>
            <person name="Kanapin A."/>
            <person name="Katoh M."/>
            <person name="Kawasawa Y."/>
            <person name="Kelso J."/>
            <person name="Kitamura H."/>
            <person name="Kitano H."/>
            <person name="Kollias G."/>
            <person name="Krishnan S.P."/>
            <person name="Kruger A."/>
            <person name="Kummerfeld S.K."/>
            <person name="Kurochkin I.V."/>
            <person name="Lareau L.F."/>
            <person name="Lazarevic D."/>
            <person name="Lipovich L."/>
            <person name="Liu J."/>
            <person name="Liuni S."/>
            <person name="McWilliam S."/>
            <person name="Madan Babu M."/>
            <person name="Madera M."/>
            <person name="Marchionni L."/>
            <person name="Matsuda H."/>
            <person name="Matsuzawa S."/>
            <person name="Miki H."/>
            <person name="Mignone F."/>
            <person name="Miyake S."/>
            <person name="Morris K."/>
            <person name="Mottagui-Tabar S."/>
            <person name="Mulder N."/>
            <person name="Nakano N."/>
            <person name="Nakauchi H."/>
            <person name="Ng P."/>
            <person name="Nilsson R."/>
            <person name="Nishiguchi S."/>
            <person name="Nishikawa S."/>
            <person name="Nori F."/>
            <person name="Ohara O."/>
            <person name="Okazaki Y."/>
            <person name="Orlando V."/>
            <person name="Pang K.C."/>
            <person name="Pavan W.J."/>
            <person name="Pavesi G."/>
            <person name="Pesole G."/>
            <person name="Petrovsky N."/>
            <person name="Piazza S."/>
            <person name="Reed J."/>
            <person name="Reid J.F."/>
            <person name="Ring B.Z."/>
            <person name="Ringwald M."/>
            <person name="Rost B."/>
            <person name="Ruan Y."/>
            <person name="Salzberg S.L."/>
            <person name="Sandelin A."/>
            <person name="Schneider C."/>
            <person name="Schoenbach C."/>
            <person name="Sekiguchi K."/>
            <person name="Semple C.A."/>
            <person name="Seno S."/>
            <person name="Sessa L."/>
            <person name="Sheng Y."/>
            <person name="Shibata Y."/>
            <person name="Shimada H."/>
            <person name="Shimada K."/>
            <person name="Silva D."/>
            <person name="Sinclair B."/>
            <person name="Sperling S."/>
            <person name="Stupka E."/>
            <person name="Sugiura K."/>
            <person name="Sultana R."/>
            <person name="Takenaka Y."/>
            <person name="Taki K."/>
            <person name="Tammoja K."/>
            <person name="Tan S.L."/>
            <person name="Tang S."/>
            <person name="Taylor M.S."/>
            <person name="Tegner J."/>
            <person name="Teichmann S.A."/>
            <person name="Ueda H.R."/>
            <person name="van Nimwegen E."/>
            <person name="Verardo R."/>
            <person name="Wei C.L."/>
            <person name="Yagi K."/>
            <person name="Yamanishi H."/>
            <person name="Zabarovsky E."/>
            <person name="Zhu S."/>
            <person name="Zimmer A."/>
            <person name="Hide W."/>
            <person name="Bult C."/>
            <person name="Grimmond S.M."/>
            <person name="Teasdale R.D."/>
            <person name="Liu E.T."/>
            <person name="Brusic V."/>
            <person name="Quackenbush J."/>
            <person name="Wahlestedt C."/>
            <person name="Mattick J.S."/>
            <person name="Hume D.A."/>
            <person name="Kai C."/>
            <person name="Sasaki D."/>
            <person name="Tomaru Y."/>
            <person name="Fukuda S."/>
            <person name="Kanamori-Katayama M."/>
            <person name="Suzuki M."/>
            <person name="Aoki J."/>
            <person name="Arakawa T."/>
            <person name="Iida J."/>
            <person name="Imamura K."/>
            <person name="Itoh M."/>
            <person name="Kato T."/>
            <person name="Kawaji H."/>
            <person name="Kawagashira N."/>
            <person name="Kawashima T."/>
            <person name="Kojima M."/>
            <person name="Kondo S."/>
            <person name="Konno H."/>
            <person name="Nakano K."/>
            <person name="Ninomiya N."/>
            <person name="Nishio T."/>
            <person name="Okada M."/>
            <person name="Plessy C."/>
            <person name="Shibata K."/>
            <person name="Shiraki T."/>
            <person name="Suzuki S."/>
            <person name="Tagami M."/>
            <person name="Waki K."/>
            <person name="Watahiki A."/>
            <person name="Okamura-Oho Y."/>
            <person name="Suzuki H."/>
            <person name="Kawai J."/>
            <person name="Hayashizaki Y."/>
        </authorList>
    </citation>
    <scope>NUCLEOTIDE SEQUENCE [LARGE SCALE MRNA]</scope>
    <source>
        <strain>C57BL/6J</strain>
        <tissue>Corpora quadrigemina</tissue>
        <tissue>Spleen</tissue>
    </source>
</reference>
<reference key="4">
    <citation type="journal article" date="2009" name="PLoS Biol.">
        <title>Lineage-specific biology revealed by a finished genome assembly of the mouse.</title>
        <authorList>
            <person name="Church D.M."/>
            <person name="Goodstadt L."/>
            <person name="Hillier L.W."/>
            <person name="Zody M.C."/>
            <person name="Goldstein S."/>
            <person name="She X."/>
            <person name="Bult C.J."/>
            <person name="Agarwala R."/>
            <person name="Cherry J.L."/>
            <person name="DiCuccio M."/>
            <person name="Hlavina W."/>
            <person name="Kapustin Y."/>
            <person name="Meric P."/>
            <person name="Maglott D."/>
            <person name="Birtle Z."/>
            <person name="Marques A.C."/>
            <person name="Graves T."/>
            <person name="Zhou S."/>
            <person name="Teague B."/>
            <person name="Potamousis K."/>
            <person name="Churas C."/>
            <person name="Place M."/>
            <person name="Herschleb J."/>
            <person name="Runnheim R."/>
            <person name="Forrest D."/>
            <person name="Amos-Landgraf J."/>
            <person name="Schwartz D.C."/>
            <person name="Cheng Z."/>
            <person name="Lindblad-Toh K."/>
            <person name="Eichler E.E."/>
            <person name="Ponting C.P."/>
        </authorList>
    </citation>
    <scope>NUCLEOTIDE SEQUENCE [LARGE SCALE GENOMIC DNA]</scope>
    <source>
        <strain>C57BL/6J</strain>
    </source>
</reference>
<reference key="5">
    <citation type="journal article" date="2007" name="Mol. Cell">
        <title>Structural basis and mechanism of autoregulation in 3-phosphoinositide-dependent Grp1 family Arf GTPase exchange factors.</title>
        <authorList>
            <person name="DiNitto J.P."/>
            <person name="Delprato A."/>
            <person name="Gabe Lee M.T."/>
            <person name="Cronin T.C."/>
            <person name="Huang S."/>
            <person name="Guilherme A."/>
            <person name="Czech M.P."/>
            <person name="Lambright D.G."/>
        </authorList>
    </citation>
    <scope>FUNCTION</scope>
    <scope>DOMAIN</scope>
    <scope>AUTOINHIBITION</scope>
</reference>
<reference key="6">
    <citation type="journal article" date="2010" name="Cell">
        <title>A tissue-specific atlas of mouse protein phosphorylation and expression.</title>
        <authorList>
            <person name="Huttlin E.L."/>
            <person name="Jedrychowski M.P."/>
            <person name="Elias J.E."/>
            <person name="Goswami T."/>
            <person name="Rad R."/>
            <person name="Beausoleil S.A."/>
            <person name="Villen J."/>
            <person name="Haas W."/>
            <person name="Sowa M.E."/>
            <person name="Gygi S.P."/>
        </authorList>
    </citation>
    <scope>IDENTIFICATION BY MASS SPECTROMETRY [LARGE SCALE ANALYSIS]</scope>
    <source>
        <tissue>Brain</tissue>
    </source>
</reference>
<reference key="7">
    <citation type="journal article" date="2010" name="Proc. Natl. Acad. Sci. U.S.A.">
        <title>FRMD4A regulates epithelial polarity by connecting Arf6 activation with the PAR complex.</title>
        <authorList>
            <person name="Ikenouchi J."/>
            <person name="Umeda M."/>
        </authorList>
    </citation>
    <scope>SUBCELLULAR LOCATION</scope>
    <scope>INTERACTION WITH FRMD4A</scope>
</reference>
<reference key="8">
    <citation type="journal article" date="2014" name="J. Biol. Chem.">
        <title>Arf6 guanine nucleotide exchange factor cytohesin-2 binds to CCDC120 and is transported along neurites to mediate neurite growth.</title>
        <authorList>
            <person name="Torii T."/>
            <person name="Miyamoto Y."/>
            <person name="Tago K."/>
            <person name="Sango K."/>
            <person name="Nakamura K."/>
            <person name="Sanbe A."/>
            <person name="Tanoue A."/>
            <person name="Yamauchi J."/>
        </authorList>
    </citation>
    <scope>FUNCTION</scope>
    <scope>INTERACTION WITH CCDC120</scope>
    <scope>SUBCELLULAR LOCATION</scope>
    <scope>DEVELOPMENTAL STAGE</scope>
</reference>
<reference key="9">
    <citation type="journal article" date="2004" name="EMBO J.">
        <title>Structural determinants of phosphoinositide selectivity in splice variants of Grp1 family PH domains.</title>
        <authorList>
            <person name="Cronin T.C."/>
            <person name="DiNitto J.P."/>
            <person name="Czech M.P."/>
            <person name="Lambright D.G."/>
        </authorList>
    </citation>
    <scope>X-RAY CRYSTALLOGRAPHY (1.8 ANGSTROMS) OF 260-378 IN COMPLEXES WITH D-MYO-INOSITOL 1,4,5-TRISPHOSPHATE AND INOSITOL 1,3,4,5-TETRAKISPHOSPHATE</scope>
    <scope>LIPID-BINDING</scope>
    <scope>DOMAIN</scope>
    <scope>MUTAGENESIS OF LYS-268; VAL-274; LYS-278; ARG-280; TYR-291; ARG-301; LYS-339 AND HIS-351</scope>
</reference>
<organism>
    <name type="scientific">Mus musculus</name>
    <name type="common">Mouse</name>
    <dbReference type="NCBI Taxonomy" id="10090"/>
    <lineage>
        <taxon>Eukaryota</taxon>
        <taxon>Metazoa</taxon>
        <taxon>Chordata</taxon>
        <taxon>Craniata</taxon>
        <taxon>Vertebrata</taxon>
        <taxon>Euteleostomi</taxon>
        <taxon>Mammalia</taxon>
        <taxon>Eutheria</taxon>
        <taxon>Euarchontoglires</taxon>
        <taxon>Glires</taxon>
        <taxon>Rodentia</taxon>
        <taxon>Myomorpha</taxon>
        <taxon>Muroidea</taxon>
        <taxon>Muridae</taxon>
        <taxon>Murinae</taxon>
        <taxon>Mus</taxon>
        <taxon>Mus</taxon>
    </lineage>
</organism>
<evidence type="ECO:0000250" key="1"/>
<evidence type="ECO:0000250" key="2">
    <source>
        <dbReference type="UniProtKB" id="Q99418"/>
    </source>
</evidence>
<evidence type="ECO:0000255" key="3"/>
<evidence type="ECO:0000255" key="4">
    <source>
        <dbReference type="PROSITE-ProRule" id="PRU00145"/>
    </source>
</evidence>
<evidence type="ECO:0000255" key="5">
    <source>
        <dbReference type="PROSITE-ProRule" id="PRU00189"/>
    </source>
</evidence>
<evidence type="ECO:0000269" key="6">
    <source>
    </source>
</evidence>
<evidence type="ECO:0000269" key="7">
    <source>
    </source>
</evidence>
<evidence type="ECO:0000269" key="8">
    <source>
    </source>
</evidence>
<evidence type="ECO:0000269" key="9">
    <source>
    </source>
</evidence>
<evidence type="ECO:0000303" key="10">
    <source>
    </source>
</evidence>
<evidence type="ECO:0000305" key="11"/>
<evidence type="ECO:0007829" key="12">
    <source>
        <dbReference type="PDB" id="1U29"/>
    </source>
</evidence>
<proteinExistence type="evidence at protein level"/>
<accession>P63034</accession>
<accession>E9QJX3</accession>
<accession>O89099</accession>
<accession>P97695</accession>
<accession>Q3UP39</accession>
<keyword id="KW-0002">3D-structure</keyword>
<keyword id="KW-0025">Alternative splicing</keyword>
<keyword id="KW-0965">Cell junction</keyword>
<keyword id="KW-1003">Cell membrane</keyword>
<keyword id="KW-0966">Cell projection</keyword>
<keyword id="KW-0175">Coiled coil</keyword>
<keyword id="KW-0963">Cytoplasm</keyword>
<keyword id="KW-0344">Guanine-nucleotide releasing factor</keyword>
<keyword id="KW-0446">Lipid-binding</keyword>
<keyword id="KW-0472">Membrane</keyword>
<keyword id="KW-1185">Reference proteome</keyword>
<keyword id="KW-0796">Tight junction</keyword>
<gene>
    <name type="primary">Cyth2</name>
    <name type="synonym">Pscd2</name>
    <name type="synonym">Sec7b</name>
</gene>
<protein>
    <recommendedName>
        <fullName>Cytohesin-2</fullName>
    </recommendedName>
    <alternativeName>
        <fullName>ARF nucleotide-binding site opener</fullName>
        <shortName>Protein ARNO</shortName>
    </alternativeName>
    <alternativeName>
        <fullName>PH, SEC7 and coiled-coil domain-containing protein 2</fullName>
        <shortName>CLM2</shortName>
    </alternativeName>
    <alternativeName>
        <fullName>SEC7 homolog B</fullName>
        <shortName>mSec7-2</shortName>
    </alternativeName>
</protein>
<sequence>MEDGVYEPPDLTPEERMELENIRRRKQELLVEIQRLREELSEAMSEVEGLEANEGSKTLQRNRKMAMGRKKFNMDPKKGIQFLVEHELLQNTPEEIARFLYKGEGLNKTAIGDYLGEREELNLSVLHAFVDLHEFTDLNLVQALRQFLWSFRLPGEAQKIDRMMEAFAQRYCLCNPGVFQSTDTCYVLSFAVIMLNTSLHNPNVRDKPGLERFVAMNRGINEGGDLPEDLLRNLYDSIRNEPFKIPEDDGNDLTHTFFNPDREGWLLKLGGGRVKTWKRRWFILTDNCLYYFEYTTDKEPRGIIPLENLSIREVDDPRKPNCFELYIPNNKGQLIKACKTEADGRVVEGNHMVYRISAPTQEEKDEWIKSIQAAVSVDPFYEMLAARKKRISVKKKQEQP</sequence>
<feature type="chain" id="PRO_0000120198" description="Cytohesin-2">
    <location>
        <begin position="1"/>
        <end position="400"/>
    </location>
</feature>
<feature type="domain" description="SEC7" evidence="5">
    <location>
        <begin position="72"/>
        <end position="201"/>
    </location>
</feature>
<feature type="domain" description="PH" evidence="4">
    <location>
        <begin position="259"/>
        <end position="376"/>
    </location>
</feature>
<feature type="region of interest" description="C-terminal autoinhibitory region" evidence="1">
    <location>
        <begin position="387"/>
        <end position="395"/>
    </location>
</feature>
<feature type="coiled-coil region" evidence="3">
    <location>
        <begin position="10"/>
        <end position="67"/>
    </location>
</feature>
<feature type="binding site">
    <location>
        <begin position="268"/>
        <end position="276"/>
    </location>
    <ligand>
        <name>a 1,2-diacyl-sn-glycero-3-phospho-(1D-myo-inositol-3,4,5-trisphosphate)</name>
        <dbReference type="ChEBI" id="CHEBI:57836"/>
    </ligand>
</feature>
<feature type="binding site" evidence="6">
    <location>
        <position position="280"/>
    </location>
    <ligand>
        <name>a 1,2-diacyl-sn-glycero-3-phospho-(1D-myo-inositol-3,4,5-trisphosphate)</name>
        <dbReference type="ChEBI" id="CHEBI:57836"/>
    </ligand>
</feature>
<feature type="binding site" evidence="6">
    <location>
        <position position="291"/>
    </location>
    <ligand>
        <name>a 1,2-diacyl-sn-glycero-3-phospho-(1D-myo-inositol-3,4,5-trisphosphate)</name>
        <dbReference type="ChEBI" id="CHEBI:57836"/>
    </ligand>
</feature>
<feature type="binding site" evidence="6">
    <location>
        <position position="301"/>
    </location>
    <ligand>
        <name>a 1,2-diacyl-sn-glycero-3-phospho-(1D-myo-inositol-3,4,5-trisphosphate)</name>
        <dbReference type="ChEBI" id="CHEBI:57836"/>
    </ligand>
</feature>
<feature type="binding site" evidence="6">
    <location>
        <position position="339"/>
    </location>
    <ligand>
        <name>a 1,2-diacyl-sn-glycero-3-phospho-(1D-myo-inositol-3,4,5-trisphosphate)</name>
        <dbReference type="ChEBI" id="CHEBI:57836"/>
    </ligand>
</feature>
<feature type="binding site" evidence="6">
    <location>
        <position position="350"/>
    </location>
    <ligand>
        <name>a 1,2-diacyl-sn-glycero-3-phospho-(1D-myo-inositol-3,4,5-trisphosphate)</name>
        <dbReference type="ChEBI" id="CHEBI:57836"/>
    </ligand>
</feature>
<feature type="binding site" evidence="6">
    <location>
        <position position="351"/>
    </location>
    <ligand>
        <name>a 1,2-diacyl-sn-glycero-3-phospho-(1D-myo-inositol-3,4,5-trisphosphate)</name>
        <dbReference type="ChEBI" id="CHEBI:57836"/>
    </ligand>
</feature>
<feature type="splice variant" id="VSP_006037" description="In isoform 3." evidence="10">
    <location>
        <begin position="1"/>
        <end position="16"/>
    </location>
</feature>
<feature type="splice variant" id="VSP_006038" description="In isoform 2." evidence="11">
    <location>
        <position position="273"/>
    </location>
</feature>
<feature type="mutagenesis site" description="Abolishes phosphatidylinositol 3,4,5-trisphosphate binding." evidence="6">
    <original>K</original>
    <variation>A</variation>
    <location>
        <position position="268"/>
    </location>
</feature>
<feature type="mutagenesis site" description="Increased phosphatidylinositol 3,4,5-trisphosphate binding." evidence="6">
    <original>V</original>
    <variation>G</variation>
    <location>
        <position position="274"/>
    </location>
</feature>
<feature type="mutagenesis site" description="Strongly reduces phosphatidylinositol 3,4,5-trisphosphate binding." evidence="6">
    <original>K</original>
    <variation>A</variation>
    <location>
        <position position="278"/>
    </location>
</feature>
<feature type="mutagenesis site" description="Abolishes phosphatidylinositol 3,4,5-trisphosphate binding." evidence="6">
    <original>R</original>
    <variation>A</variation>
    <location>
        <position position="280"/>
    </location>
</feature>
<feature type="mutagenesis site" description="Abolishes phosphatidylinositol 3,4,5-trisphosphate binding." evidence="6">
    <original>Y</original>
    <variation>F</variation>
    <location>
        <position position="291"/>
    </location>
</feature>
<feature type="mutagenesis site" description="Abolishes phosphatidylinositol 3,4,5-trisphosphate binding." evidence="6">
    <original>R</original>
    <variation>A</variation>
    <location>
        <position position="301"/>
    </location>
</feature>
<feature type="mutagenesis site" description="Abolishes phosphatidylinositol 3,4,5-trisphosphate binding." evidence="6">
    <original>K</original>
    <variation>A</variation>
    <location>
        <position position="339"/>
    </location>
</feature>
<feature type="mutagenesis site" description="Abolishes phosphatidylinositol 3,4,5-trisphosphate binding." evidence="6">
    <original>H</original>
    <variation>A</variation>
    <location>
        <position position="351"/>
    </location>
</feature>
<feature type="strand" evidence="12">
    <location>
        <begin position="262"/>
        <end position="269"/>
    </location>
</feature>
<feature type="strand" evidence="12">
    <location>
        <begin position="272"/>
        <end position="274"/>
    </location>
</feature>
<feature type="strand" evidence="12">
    <location>
        <begin position="277"/>
        <end position="285"/>
    </location>
</feature>
<feature type="strand" evidence="12">
    <location>
        <begin position="288"/>
        <end position="294"/>
    </location>
</feature>
<feature type="strand" evidence="12">
    <location>
        <begin position="301"/>
        <end position="305"/>
    </location>
</feature>
<feature type="strand" evidence="12">
    <location>
        <begin position="310"/>
        <end position="314"/>
    </location>
</feature>
<feature type="strand" evidence="12">
    <location>
        <begin position="317"/>
        <end position="326"/>
    </location>
</feature>
<feature type="strand" evidence="12">
    <location>
        <begin position="338"/>
        <end position="340"/>
    </location>
</feature>
<feature type="strand" evidence="12">
    <location>
        <begin position="346"/>
        <end position="348"/>
    </location>
</feature>
<feature type="strand" evidence="12">
    <location>
        <begin position="352"/>
        <end position="357"/>
    </location>
</feature>
<feature type="helix" evidence="12">
    <location>
        <begin position="361"/>
        <end position="376"/>
    </location>
</feature>